<proteinExistence type="evidence at protein level"/>
<protein>
    <recommendedName>
        <fullName>Glutamate--cysteine ligase EgtA</fullName>
        <ecNumber evidence="2">6.3.2.2</ecNumber>
    </recommendedName>
    <alternativeName>
        <fullName evidence="3">Gamma-glutamylcysteine synthase</fullName>
        <shortName>GCS</shortName>
        <shortName>Gamma-ECS</shortName>
    </alternativeName>
</protein>
<sequence>MTLAAMTAAASQLDNAAPDDVEITDSSAAAEYIADGCLVDGPLGRVGLEMEAHCFDPADPFRRPSWEEITEVLEWLSPLPGGSVVSVEPGGAVELSGPPADGVLAAIGAMTRDQAVLRSALANAGLGLVFLGADPLRSPVRVNPGARYRAMEQFFAASHSGVPGAAMMTSTAAIQVNLDAGPQEGWAERVRLAHALGPTMIAIAANSPMLGGRFSGWQSTRQRVWGQMDSARCGPILGASGDHPGIDWAKYALKAPVMMVRSPDTQDTRAVTDYVPFTDWVDGRVLLDGRRATVADLVYHLTTLFPPVRPRQWLEIRYLDSVPDEVWPAVVFTLVTLLDDPVAADLAVDAVEPVATAWDTAARIGLADRRLYLAANRCLAIAARRVPTELIGAMQRLVDHVDRGVCPADDFSDRVIAGGIASAVTGMMHGAS</sequence>
<gene>
    <name type="primary">egtA</name>
    <name evidence="3" type="synonym">gshA</name>
    <name type="ordered locus">Rv3704c</name>
</gene>
<organism>
    <name type="scientific">Mycobacterium tuberculosis (strain ATCC 25618 / H37Rv)</name>
    <dbReference type="NCBI Taxonomy" id="83332"/>
    <lineage>
        <taxon>Bacteria</taxon>
        <taxon>Bacillati</taxon>
        <taxon>Actinomycetota</taxon>
        <taxon>Actinomycetes</taxon>
        <taxon>Mycobacteriales</taxon>
        <taxon>Mycobacteriaceae</taxon>
        <taxon>Mycobacterium</taxon>
        <taxon>Mycobacterium tuberculosis complex</taxon>
    </lineage>
</organism>
<comment type="function">
    <text evidence="1 2">Catalyzes the synthesis of gamma-glutamylcysteine (gamma-GC) (PubMed:16262797). This compound is used as substrate for the biosynthesis of the low-molecular thiol compound ergothioneine (By similarity).</text>
</comment>
<comment type="catalytic activity">
    <reaction evidence="2">
        <text>L-cysteine + L-glutamate + ATP = gamma-L-glutamyl-L-cysteine + ADP + phosphate + H(+)</text>
        <dbReference type="Rhea" id="RHEA:13285"/>
        <dbReference type="ChEBI" id="CHEBI:15378"/>
        <dbReference type="ChEBI" id="CHEBI:29985"/>
        <dbReference type="ChEBI" id="CHEBI:30616"/>
        <dbReference type="ChEBI" id="CHEBI:35235"/>
        <dbReference type="ChEBI" id="CHEBI:43474"/>
        <dbReference type="ChEBI" id="CHEBI:58173"/>
        <dbReference type="ChEBI" id="CHEBI:456216"/>
        <dbReference type="EC" id="6.3.2.2"/>
    </reaction>
</comment>
<comment type="activity regulation">
    <text evidence="2">Weakly inhibited by L-methionine-S,R-sulphoximine (MSO) and strongly inhibited by D,L-buthionine-S,R-sulphoximine (BSO) in vitro.</text>
</comment>
<comment type="pathway">
    <text evidence="1">Amino-acid biosynthesis; ergothioneine biosynthesis.</text>
</comment>
<comment type="miscellaneous">
    <text evidence="5">Was identified as a high-confidence drug target.</text>
</comment>
<comment type="similarity">
    <text evidence="4">Belongs to the glutamate--cysteine ligase type 2 family. EgtA subfamily.</text>
</comment>
<name>EGTA_MYCTU</name>
<feature type="chain" id="PRO_0000413646" description="Glutamate--cysteine ligase EgtA">
    <location>
        <begin position="1"/>
        <end position="432"/>
    </location>
</feature>
<evidence type="ECO:0000250" key="1">
    <source>
        <dbReference type="UniProtKB" id="A0R5N1"/>
    </source>
</evidence>
<evidence type="ECO:0000269" key="2">
    <source>
    </source>
</evidence>
<evidence type="ECO:0000303" key="3">
    <source>
    </source>
</evidence>
<evidence type="ECO:0000305" key="4"/>
<evidence type="ECO:0000305" key="5">
    <source>
    </source>
</evidence>
<reference key="1">
    <citation type="journal article" date="1998" name="Nature">
        <title>Deciphering the biology of Mycobacterium tuberculosis from the complete genome sequence.</title>
        <authorList>
            <person name="Cole S.T."/>
            <person name="Brosch R."/>
            <person name="Parkhill J."/>
            <person name="Garnier T."/>
            <person name="Churcher C.M."/>
            <person name="Harris D.E."/>
            <person name="Gordon S.V."/>
            <person name="Eiglmeier K."/>
            <person name="Gas S."/>
            <person name="Barry C.E. III"/>
            <person name="Tekaia F."/>
            <person name="Badcock K."/>
            <person name="Basham D."/>
            <person name="Brown D."/>
            <person name="Chillingworth T."/>
            <person name="Connor R."/>
            <person name="Davies R.M."/>
            <person name="Devlin K."/>
            <person name="Feltwell T."/>
            <person name="Gentles S."/>
            <person name="Hamlin N."/>
            <person name="Holroyd S."/>
            <person name="Hornsby T."/>
            <person name="Jagels K."/>
            <person name="Krogh A."/>
            <person name="McLean J."/>
            <person name="Moule S."/>
            <person name="Murphy L.D."/>
            <person name="Oliver S."/>
            <person name="Osborne J."/>
            <person name="Quail M.A."/>
            <person name="Rajandream M.A."/>
            <person name="Rogers J."/>
            <person name="Rutter S."/>
            <person name="Seeger K."/>
            <person name="Skelton S."/>
            <person name="Squares S."/>
            <person name="Squares R."/>
            <person name="Sulston J.E."/>
            <person name="Taylor K."/>
            <person name="Whitehead S."/>
            <person name="Barrell B.G."/>
        </authorList>
    </citation>
    <scope>NUCLEOTIDE SEQUENCE [LARGE SCALE GENOMIC DNA]</scope>
    <source>
        <strain>ATCC 25618 / H37Rv</strain>
    </source>
</reference>
<reference key="2">
    <citation type="journal article" date="2005" name="Mol. Microbiol.">
        <title>All four Mycobacterium tuberculosis glnA genes encode glutamine synthetase activities but only GlnA1 is abundantly expressed and essential for bacterial homeostasis.</title>
        <authorList>
            <person name="Harth G."/>
            <person name="Maslesa-Galic S."/>
            <person name="Tullius M.V."/>
            <person name="Horwitz M.A."/>
        </authorList>
    </citation>
    <scope>PROTEIN SEQUENCE OF 1-10</scope>
    <scope>FUNCTION</scope>
    <scope>CATALYTIC ACTIVITY</scope>
    <scope>ACTIVITY REGULATION</scope>
    <source>
        <strain>ATCC 35801 / TMC 107 / Erdman</strain>
    </source>
</reference>
<reference key="3">
    <citation type="journal article" date="2008" name="BMC Syst. Biol.">
        <title>targetTB: a target identification pipeline for Mycobacterium tuberculosis through an interactome, reactome and genome-scale structural analysis.</title>
        <authorList>
            <person name="Raman K."/>
            <person name="Yeturu K."/>
            <person name="Chandra N."/>
        </authorList>
    </citation>
    <scope>IDENTIFICATION AS A DRUG TARGET [LARGE SCALE ANALYSIS]</scope>
</reference>
<reference key="4">
    <citation type="journal article" date="2011" name="Mol. Cell. Proteomics">
        <title>Proteogenomic analysis of Mycobacterium tuberculosis by high resolution mass spectrometry.</title>
        <authorList>
            <person name="Kelkar D.S."/>
            <person name="Kumar D."/>
            <person name="Kumar P."/>
            <person name="Balakrishnan L."/>
            <person name="Muthusamy B."/>
            <person name="Yadav A.K."/>
            <person name="Shrivastava P."/>
            <person name="Marimuthu A."/>
            <person name="Anand S."/>
            <person name="Sundaram H."/>
            <person name="Kingsbury R."/>
            <person name="Harsha H.C."/>
            <person name="Nair B."/>
            <person name="Prasad T.S."/>
            <person name="Chauhan D.S."/>
            <person name="Katoch K."/>
            <person name="Katoch V.M."/>
            <person name="Kumar P."/>
            <person name="Chaerkady R."/>
            <person name="Ramachandran S."/>
            <person name="Dash D."/>
            <person name="Pandey A."/>
        </authorList>
    </citation>
    <scope>IDENTIFICATION BY MASS SPECTROMETRY [LARGE SCALE ANALYSIS]</scope>
    <source>
        <strain>ATCC 25618 / H37Rv</strain>
    </source>
</reference>
<dbReference type="EC" id="6.3.2.2" evidence="2"/>
<dbReference type="EMBL" id="AL123456">
    <property type="protein sequence ID" value="CCP46529.1"/>
    <property type="molecule type" value="Genomic_DNA"/>
</dbReference>
<dbReference type="PIR" id="A70794">
    <property type="entry name" value="A70794"/>
</dbReference>
<dbReference type="RefSeq" id="NP_218221.1">
    <property type="nucleotide sequence ID" value="NC_000962.3"/>
</dbReference>
<dbReference type="RefSeq" id="WP_003419809.1">
    <property type="nucleotide sequence ID" value="NZ_NVQJ01000028.1"/>
</dbReference>
<dbReference type="SMR" id="P9WPK7"/>
<dbReference type="FunCoup" id="P9WPK7">
    <property type="interactions" value="236"/>
</dbReference>
<dbReference type="STRING" id="83332.Rv3704c"/>
<dbReference type="PaxDb" id="83332-Rv3704c"/>
<dbReference type="DNASU" id="885053"/>
<dbReference type="GeneID" id="885053"/>
<dbReference type="KEGG" id="mtu:Rv3704c"/>
<dbReference type="KEGG" id="mtv:RVBD_3704c"/>
<dbReference type="TubercuList" id="Rv3704c"/>
<dbReference type="eggNOG" id="COG3572">
    <property type="taxonomic scope" value="Bacteria"/>
</dbReference>
<dbReference type="InParanoid" id="P9WPK7"/>
<dbReference type="OrthoDB" id="9780152at2"/>
<dbReference type="PhylomeDB" id="P9WPK7"/>
<dbReference type="UniPathway" id="UPA01014"/>
<dbReference type="Proteomes" id="UP000001584">
    <property type="component" value="Chromosome"/>
</dbReference>
<dbReference type="GO" id="GO:0005886">
    <property type="term" value="C:plasma membrane"/>
    <property type="evidence" value="ECO:0007005"/>
    <property type="project" value="MTBBASE"/>
</dbReference>
<dbReference type="GO" id="GO:0005524">
    <property type="term" value="F:ATP binding"/>
    <property type="evidence" value="ECO:0007669"/>
    <property type="project" value="UniProtKB-UniRule"/>
</dbReference>
<dbReference type="GO" id="GO:0004357">
    <property type="term" value="F:glutamate-cysteine ligase activity"/>
    <property type="evidence" value="ECO:0000314"/>
    <property type="project" value="UniProtKB"/>
</dbReference>
<dbReference type="GO" id="GO:0052699">
    <property type="term" value="P:ergothioneine biosynthetic process"/>
    <property type="evidence" value="ECO:0007669"/>
    <property type="project" value="UniProtKB-UniRule"/>
</dbReference>
<dbReference type="GO" id="GO:0006750">
    <property type="term" value="P:glutathione biosynthetic process"/>
    <property type="evidence" value="ECO:0007669"/>
    <property type="project" value="InterPro"/>
</dbReference>
<dbReference type="FunFam" id="3.30.590.20:FF:000006">
    <property type="entry name" value="Glutamate--cysteine ligase EgtA"/>
    <property type="match status" value="1"/>
</dbReference>
<dbReference type="Gene3D" id="3.30.590.20">
    <property type="match status" value="1"/>
</dbReference>
<dbReference type="HAMAP" id="MF_02034">
    <property type="entry name" value="EgtA"/>
    <property type="match status" value="1"/>
</dbReference>
<dbReference type="InterPro" id="IPR017809">
    <property type="entry name" value="EgtA_Actinobacteria"/>
</dbReference>
<dbReference type="InterPro" id="IPR035434">
    <property type="entry name" value="GCL_bact_plant"/>
</dbReference>
<dbReference type="InterPro" id="IPR006336">
    <property type="entry name" value="GCS2"/>
</dbReference>
<dbReference type="InterPro" id="IPR014746">
    <property type="entry name" value="Gln_synth/guanido_kin_cat_dom"/>
</dbReference>
<dbReference type="NCBIfam" id="TIGR03444">
    <property type="entry name" value="EgtA_Cys_ligase"/>
    <property type="match status" value="1"/>
</dbReference>
<dbReference type="PANTHER" id="PTHR34378">
    <property type="entry name" value="GLUTAMATE--CYSTEINE LIGASE, CHLOROPLASTIC"/>
    <property type="match status" value="1"/>
</dbReference>
<dbReference type="PANTHER" id="PTHR34378:SF1">
    <property type="entry name" value="GLUTAMATE--CYSTEINE LIGASE, CHLOROPLASTIC"/>
    <property type="match status" value="1"/>
</dbReference>
<dbReference type="Pfam" id="PF04107">
    <property type="entry name" value="GCS2"/>
    <property type="match status" value="1"/>
</dbReference>
<dbReference type="PIRSF" id="PIRSF017901">
    <property type="entry name" value="GCL"/>
    <property type="match status" value="1"/>
</dbReference>
<dbReference type="SUPFAM" id="SSF55931">
    <property type="entry name" value="Glutamine synthetase/guanido kinase"/>
    <property type="match status" value="1"/>
</dbReference>
<accession>P9WPK7</accession>
<accession>L0TDK0</accession>
<accession>O69672</accession>
<accession>Q7D512</accession>
<keyword id="KW-0067">ATP-binding</keyword>
<keyword id="KW-0903">Direct protein sequencing</keyword>
<keyword id="KW-0436">Ligase</keyword>
<keyword id="KW-0547">Nucleotide-binding</keyword>
<keyword id="KW-1185">Reference proteome</keyword>